<keyword id="KW-0067">ATP-binding</keyword>
<keyword id="KW-0436">Ligase</keyword>
<keyword id="KW-0455">Luminescence</keyword>
<keyword id="KW-0547">Nucleotide-binding</keyword>
<name>LUXE_ALIFS</name>
<reference key="1">
    <citation type="submission" date="1999-07" db="EMBL/GenBank/DDBJ databases">
        <title>Vibrio fischeri Lux operon SalI digest.</title>
        <authorList>
            <person name="Knight T."/>
            <person name="Papadakis N."/>
        </authorList>
    </citation>
    <scope>NUCLEOTIDE SEQUENCE [GENOMIC DNA]</scope>
    <source>
        <strain evidence="3">MJ-1</strain>
    </source>
</reference>
<reference key="2">
    <citation type="journal article" date="1990" name="J. Bacteriol.">
        <title>A new Vibrio fischeri lux gene precedes a bidirectional termination site for the lux operon.</title>
        <authorList>
            <person name="Swartzman E."/>
            <person name="Kapoor S."/>
            <person name="Graham A.F."/>
            <person name="Meighen E.A."/>
        </authorList>
    </citation>
    <scope>NUCLEOTIDE SEQUENCE [GENOMIC DNA] OF 376-378</scope>
    <source>
        <strain>ATCC 7744 / DSM 507 / NCIMB 1281 / 398</strain>
    </source>
</reference>
<protein>
    <recommendedName>
        <fullName evidence="2">Long-chain-fatty-acid--luciferin-component ligase</fullName>
        <ecNumber evidence="1">6.2.1.19</ecNumber>
    </recommendedName>
    <alternativeName>
        <fullName evidence="2">Acyl-protein synthetase</fullName>
    </alternativeName>
</protein>
<feature type="chain" id="PRO_0000208065" description="Long-chain-fatty-acid--luciferin-component ligase">
    <location>
        <begin position="1"/>
        <end position="378"/>
    </location>
</feature>
<organism>
    <name type="scientific">Aliivibrio fischeri</name>
    <name type="common">Vibrio fischeri</name>
    <dbReference type="NCBI Taxonomy" id="668"/>
    <lineage>
        <taxon>Bacteria</taxon>
        <taxon>Pseudomonadati</taxon>
        <taxon>Pseudomonadota</taxon>
        <taxon>Gammaproteobacteria</taxon>
        <taxon>Vibrionales</taxon>
        <taxon>Vibrionaceae</taxon>
        <taxon>Aliivibrio</taxon>
    </lineage>
</organism>
<sequence>MTVHTEYKRNQIIASSEIDDLIFMTKPQEWSFEEQKEIRDKLVREAFYFHYNRNEEYRNYCINQHVSDNLHTIDEIPVFPTSVFKYKKLHTVTAEDIENWYTSSGTRGVKSHIARDRLSIERLLGSVNFGMKYVGDWFEHQMELINLGPDRFNTNNIWFKYVMSLVELLYPTEFTVDNDKIDFEKTVKHLFRIKNSKKDICLIGPPFFVYLLCQYMKENNIEFKGGDRVHIITGGGWKSNQNDSLDRADFNQLLMDTFQLDKINQIRDTFNQVELNTCFFEDEFQRKHVPPWVYARALDPETLKPVADGEIGLLSYMDASSTAYPAFIVTDDIGIVKEIREPDPYPGVTVEIVRRLNTRAQKGCALSMANVIQKNIKD</sequence>
<proteinExistence type="inferred from homology"/>
<comment type="function">
    <text evidence="1">Acyl-protein synthetase activates tetradecanoic acid. It is a component of the fatty acid reductase complex responsible for converting tetradecanoic acid to the aldehyde which serves as substrate in the luciferase-catalyzed reaction.</text>
</comment>
<comment type="catalytic activity">
    <reaction evidence="1">
        <text>a long-chain fatty acid + L-cysteinyl-[protein] + ATP = an S-(long-chain fatty acyl)-L-cysteinyl-[protein] + AMP + diphosphate</text>
        <dbReference type="Rhea" id="RHEA:20101"/>
        <dbReference type="Rhea" id="RHEA-COMP:10131"/>
        <dbReference type="Rhea" id="RHEA-COMP:12762"/>
        <dbReference type="ChEBI" id="CHEBI:29950"/>
        <dbReference type="ChEBI" id="CHEBI:30616"/>
        <dbReference type="ChEBI" id="CHEBI:33019"/>
        <dbReference type="ChEBI" id="CHEBI:57560"/>
        <dbReference type="ChEBI" id="CHEBI:133479"/>
        <dbReference type="ChEBI" id="CHEBI:456215"/>
        <dbReference type="EC" id="6.2.1.19"/>
    </reaction>
</comment>
<comment type="pathway">
    <text evidence="1">Lipid metabolism; fatty acid reduction for biolumincescence.</text>
</comment>
<comment type="similarity">
    <text evidence="2">Belongs to the LuxE family.</text>
</comment>
<dbReference type="EC" id="6.2.1.19" evidence="1"/>
<dbReference type="EMBL" id="AF170104">
    <property type="protein sequence ID" value="AAD48479.1"/>
    <property type="molecule type" value="Genomic_DNA"/>
</dbReference>
<dbReference type="EMBL" id="M62812">
    <property type="status" value="NOT_ANNOTATED_CDS"/>
    <property type="molecule type" value="Genomic_DNA"/>
</dbReference>
<dbReference type="RefSeq" id="WP_005423445.1">
    <property type="nucleotide sequence ID" value="NZ_CVOI01000001.1"/>
</dbReference>
<dbReference type="SMR" id="P24272"/>
<dbReference type="UniPathway" id="UPA00569"/>
<dbReference type="GO" id="GO:0005524">
    <property type="term" value="F:ATP binding"/>
    <property type="evidence" value="ECO:0007669"/>
    <property type="project" value="UniProtKB-KW"/>
</dbReference>
<dbReference type="GO" id="GO:0047474">
    <property type="term" value="F:long-chain fatty acid--protein ligase activity"/>
    <property type="evidence" value="ECO:0007669"/>
    <property type="project" value="UniProtKB-EC"/>
</dbReference>
<dbReference type="GO" id="GO:0008218">
    <property type="term" value="P:bioluminescence"/>
    <property type="evidence" value="ECO:0000315"/>
    <property type="project" value="CACAO"/>
</dbReference>
<dbReference type="Gene3D" id="3.40.50.12780">
    <property type="entry name" value="N-terminal domain of ligase-like"/>
    <property type="match status" value="1"/>
</dbReference>
<dbReference type="InterPro" id="IPR042099">
    <property type="entry name" value="ANL_N_sf"/>
</dbReference>
<dbReference type="InterPro" id="IPR007534">
    <property type="entry name" value="LuxE"/>
</dbReference>
<dbReference type="InterPro" id="IPR016671">
    <property type="entry name" value="LuxE_bac"/>
</dbReference>
<dbReference type="Pfam" id="PF04443">
    <property type="entry name" value="LuxE"/>
    <property type="match status" value="1"/>
</dbReference>
<dbReference type="PIRSF" id="PIRSF016580">
    <property type="entry name" value="Acyl-protein_synthetase_LuxE"/>
    <property type="match status" value="1"/>
</dbReference>
<accession>P24272</accession>
<accession>Q9S3Z0</accession>
<gene>
    <name evidence="3" type="primary">luxE</name>
</gene>
<evidence type="ECO:0000250" key="1"/>
<evidence type="ECO:0000305" key="2"/>
<evidence type="ECO:0000312" key="3">
    <source>
        <dbReference type="EMBL" id="AAD48479.1"/>
    </source>
</evidence>